<name>LGT_VIBPA</name>
<keyword id="KW-0997">Cell inner membrane</keyword>
<keyword id="KW-1003">Cell membrane</keyword>
<keyword id="KW-0472">Membrane</keyword>
<keyword id="KW-0808">Transferase</keyword>
<keyword id="KW-0812">Transmembrane</keyword>
<keyword id="KW-1133">Transmembrane helix</keyword>
<comment type="function">
    <text evidence="1">Catalyzes the transfer of the diacylglyceryl group from phosphatidylglycerol to the sulfhydryl group of the N-terminal cysteine of a prolipoprotein, the first step in the formation of mature lipoproteins.</text>
</comment>
<comment type="catalytic activity">
    <reaction evidence="1">
        <text>L-cysteinyl-[prolipoprotein] + a 1,2-diacyl-sn-glycero-3-phospho-(1'-sn-glycerol) = an S-1,2-diacyl-sn-glyceryl-L-cysteinyl-[prolipoprotein] + sn-glycerol 1-phosphate + H(+)</text>
        <dbReference type="Rhea" id="RHEA:56712"/>
        <dbReference type="Rhea" id="RHEA-COMP:14679"/>
        <dbReference type="Rhea" id="RHEA-COMP:14680"/>
        <dbReference type="ChEBI" id="CHEBI:15378"/>
        <dbReference type="ChEBI" id="CHEBI:29950"/>
        <dbReference type="ChEBI" id="CHEBI:57685"/>
        <dbReference type="ChEBI" id="CHEBI:64716"/>
        <dbReference type="ChEBI" id="CHEBI:140658"/>
        <dbReference type="EC" id="2.5.1.145"/>
    </reaction>
</comment>
<comment type="pathway">
    <text evidence="1">Protein modification; lipoprotein biosynthesis (diacylglyceryl transfer).</text>
</comment>
<comment type="subcellular location">
    <subcellularLocation>
        <location evidence="1">Cell inner membrane</location>
        <topology evidence="1">Multi-pass membrane protein</topology>
    </subcellularLocation>
</comment>
<comment type="similarity">
    <text evidence="1">Belongs to the Lgt family.</text>
</comment>
<sequence>MSQGYLQFPNIDPVLVSIGPVSIRWYGLMYLVGFMFALWLANRRADKPGSGWTREQVSDLLFAGFLGVVIGGRVGYVIFYNFELFLDDPLYLFKVWTGGMSFHGGLLGVITAMFWYAHKNGRTFFGVADFVAPLVPFGLGMGRMGNFMNSELWGRVTDVPWAIVFPNGGPLPRHPSQLYEMLLEGVVLFFILNWFIKKPRPLGSVSGLFLAGYGTFRFLVEFVREPDAQLGLFGGYISMGQILSMPMIVLGILMMVWAYKRGLYQDKAQVKTK</sequence>
<organism>
    <name type="scientific">Vibrio parahaemolyticus serotype O3:K6 (strain RIMD 2210633)</name>
    <dbReference type="NCBI Taxonomy" id="223926"/>
    <lineage>
        <taxon>Bacteria</taxon>
        <taxon>Pseudomonadati</taxon>
        <taxon>Pseudomonadota</taxon>
        <taxon>Gammaproteobacteria</taxon>
        <taxon>Vibrionales</taxon>
        <taxon>Vibrionaceae</taxon>
        <taxon>Vibrio</taxon>
    </lineage>
</organism>
<proteinExistence type="inferred from homology"/>
<gene>
    <name evidence="1" type="primary">lgt</name>
    <name type="ordered locus">VP0523</name>
</gene>
<accession>Q87SA1</accession>
<evidence type="ECO:0000255" key="1">
    <source>
        <dbReference type="HAMAP-Rule" id="MF_01147"/>
    </source>
</evidence>
<reference key="1">
    <citation type="journal article" date="2003" name="Lancet">
        <title>Genome sequence of Vibrio parahaemolyticus: a pathogenic mechanism distinct from that of V. cholerae.</title>
        <authorList>
            <person name="Makino K."/>
            <person name="Oshima K."/>
            <person name="Kurokawa K."/>
            <person name="Yokoyama K."/>
            <person name="Uda T."/>
            <person name="Tagomori K."/>
            <person name="Iijima Y."/>
            <person name="Najima M."/>
            <person name="Nakano M."/>
            <person name="Yamashita A."/>
            <person name="Kubota Y."/>
            <person name="Kimura S."/>
            <person name="Yasunaga T."/>
            <person name="Honda T."/>
            <person name="Shinagawa H."/>
            <person name="Hattori M."/>
            <person name="Iida T."/>
        </authorList>
    </citation>
    <scope>NUCLEOTIDE SEQUENCE [LARGE SCALE GENOMIC DNA]</scope>
    <source>
        <strain>RIMD 2210633</strain>
    </source>
</reference>
<dbReference type="EC" id="2.5.1.145" evidence="1"/>
<dbReference type="EMBL" id="BA000031">
    <property type="protein sequence ID" value="BAC58786.1"/>
    <property type="molecule type" value="Genomic_DNA"/>
</dbReference>
<dbReference type="RefSeq" id="NP_796902.1">
    <property type="nucleotide sequence ID" value="NC_004603.1"/>
</dbReference>
<dbReference type="RefSeq" id="WP_005481391.1">
    <property type="nucleotide sequence ID" value="NC_004603.1"/>
</dbReference>
<dbReference type="SMR" id="Q87SA1"/>
<dbReference type="GeneID" id="1187991"/>
<dbReference type="KEGG" id="vpa:VP0523"/>
<dbReference type="PATRIC" id="fig|223926.6.peg.498"/>
<dbReference type="eggNOG" id="COG0682">
    <property type="taxonomic scope" value="Bacteria"/>
</dbReference>
<dbReference type="HOGENOM" id="CLU_013386_1_0_6"/>
<dbReference type="UniPathway" id="UPA00664"/>
<dbReference type="Proteomes" id="UP000002493">
    <property type="component" value="Chromosome 1"/>
</dbReference>
<dbReference type="GO" id="GO:0005886">
    <property type="term" value="C:plasma membrane"/>
    <property type="evidence" value="ECO:0007669"/>
    <property type="project" value="UniProtKB-SubCell"/>
</dbReference>
<dbReference type="GO" id="GO:0008961">
    <property type="term" value="F:phosphatidylglycerol-prolipoprotein diacylglyceryl transferase activity"/>
    <property type="evidence" value="ECO:0007669"/>
    <property type="project" value="UniProtKB-UniRule"/>
</dbReference>
<dbReference type="GO" id="GO:0042158">
    <property type="term" value="P:lipoprotein biosynthetic process"/>
    <property type="evidence" value="ECO:0007669"/>
    <property type="project" value="UniProtKB-UniRule"/>
</dbReference>
<dbReference type="HAMAP" id="MF_01147">
    <property type="entry name" value="Lgt"/>
    <property type="match status" value="1"/>
</dbReference>
<dbReference type="InterPro" id="IPR001640">
    <property type="entry name" value="Lgt"/>
</dbReference>
<dbReference type="NCBIfam" id="TIGR00544">
    <property type="entry name" value="lgt"/>
    <property type="match status" value="1"/>
</dbReference>
<dbReference type="PANTHER" id="PTHR30589:SF0">
    <property type="entry name" value="PHOSPHATIDYLGLYCEROL--PROLIPOPROTEIN DIACYLGLYCERYL TRANSFERASE"/>
    <property type="match status" value="1"/>
</dbReference>
<dbReference type="PANTHER" id="PTHR30589">
    <property type="entry name" value="PROLIPOPROTEIN DIACYLGLYCERYL TRANSFERASE"/>
    <property type="match status" value="1"/>
</dbReference>
<dbReference type="Pfam" id="PF01790">
    <property type="entry name" value="LGT"/>
    <property type="match status" value="1"/>
</dbReference>
<dbReference type="PROSITE" id="PS01311">
    <property type="entry name" value="LGT"/>
    <property type="match status" value="1"/>
</dbReference>
<protein>
    <recommendedName>
        <fullName evidence="1">Phosphatidylglycerol--prolipoprotein diacylglyceryl transferase</fullName>
        <ecNumber evidence="1">2.5.1.145</ecNumber>
    </recommendedName>
</protein>
<feature type="chain" id="PRO_0000172711" description="Phosphatidylglycerol--prolipoprotein diacylglyceryl transferase">
    <location>
        <begin position="1"/>
        <end position="273"/>
    </location>
</feature>
<feature type="transmembrane region" description="Helical" evidence="1">
    <location>
        <begin position="21"/>
        <end position="41"/>
    </location>
</feature>
<feature type="transmembrane region" description="Helical" evidence="1">
    <location>
        <begin position="60"/>
        <end position="80"/>
    </location>
</feature>
<feature type="transmembrane region" description="Helical" evidence="1">
    <location>
        <begin position="95"/>
        <end position="115"/>
    </location>
</feature>
<feature type="transmembrane region" description="Helical" evidence="1">
    <location>
        <begin position="124"/>
        <end position="144"/>
    </location>
</feature>
<feature type="transmembrane region" description="Helical" evidence="1">
    <location>
        <begin position="176"/>
        <end position="196"/>
    </location>
</feature>
<feature type="transmembrane region" description="Helical" evidence="1">
    <location>
        <begin position="203"/>
        <end position="223"/>
    </location>
</feature>
<feature type="transmembrane region" description="Helical" evidence="1">
    <location>
        <begin position="237"/>
        <end position="257"/>
    </location>
</feature>
<feature type="binding site" evidence="1">
    <location>
        <position position="143"/>
    </location>
    <ligand>
        <name>a 1,2-diacyl-sn-glycero-3-phospho-(1'-sn-glycerol)</name>
        <dbReference type="ChEBI" id="CHEBI:64716"/>
    </ligand>
</feature>